<organism>
    <name type="scientific">Dictyostelium discoideum</name>
    <name type="common">Social amoeba</name>
    <dbReference type="NCBI Taxonomy" id="44689"/>
    <lineage>
        <taxon>Eukaryota</taxon>
        <taxon>Amoebozoa</taxon>
        <taxon>Evosea</taxon>
        <taxon>Eumycetozoa</taxon>
        <taxon>Dictyostelia</taxon>
        <taxon>Dictyosteliales</taxon>
        <taxon>Dictyosteliaceae</taxon>
        <taxon>Dictyostelium</taxon>
    </lineage>
</organism>
<sequence length="876" mass="98566">MSKKTNINTNTKINNFFQTKTNNANVVNEKGYIEDDNEIIDINDFEEDQNLYKIQNKSNGNNSINNNNNNKNTPTKPNLNLTPTKSHTISFPTRPKLPSFTQPNNNNNNNNNNNNNNNINNNNNNNNNNNNNNNNNNNNNNNNSSTNVKPTTTTTTTTTINNNNNNNNNNNINNNNIDLKNKYSFLTNFKKKSFAPLSEQMRPTELSDFIGQESLLVGDPIVKKLFQSPELPSFILYGPPGCGKTTLAQIVASKSNYNINALSAVGSGVKDIKEVIDKARNTLQFGKKTILFIDEIHRYNKLQQDVLLPAIESGIIILIGATTENPSFELNGALLSRCKVFKMEKLTKENLETLIKRTLEVTPLLMDRRLIMDEDAIKSLAEIADGDARVAINVLDMAIKANKEEQTYKERMEEKHSTSGIVRDIVLTKKQMGSLLQRTSLIYDKGGDAFYELISALHKSVRGSDANATAYWVIRMLESGCEPLYIVRRMVRMASEDIGLADNSALPLAIAAYQAVHFVGMPECTNAILQCAVYLANAAKSNSCDHWYAHTREYLEKHEGPPVPIHLRNAPTKMMKDWGYGADYQYNHAFDDQSQVTQIYLPEPIKNEKFFEYKLTCPSVKDRQQSQDQTQRSSQQQQQQQTQPQQQTQPQQQTQQQIQQQLEQLKQIQQQLEQQVQQQIQQQSSQSPSQQSQLQELQQIQQQLQQIQQTNSQINNKNNDSNIIKKNVNNSLDLNPTLPKKQKMIIPSILDNSNNNNNNNNINKSPTPIKKANISHNQLDSSINTSAITIDDSSECDINFDDDFDMASVSSTTMISNIPVGANVAGATEAETETKAISSTDTKESVSINDSDKDLTTTHKNEQDQNNPPDPISLDF</sequence>
<keyword id="KW-0067">ATP-binding</keyword>
<keyword id="KW-0227">DNA damage</keyword>
<keyword id="KW-0235">DNA replication</keyword>
<keyword id="KW-0378">Hydrolase</keyword>
<keyword id="KW-0479">Metal-binding</keyword>
<keyword id="KW-0547">Nucleotide-binding</keyword>
<keyword id="KW-0539">Nucleus</keyword>
<keyword id="KW-0597">Phosphoprotein</keyword>
<keyword id="KW-1185">Reference proteome</keyword>
<gene>
    <name evidence="3" type="primary">wrnip1</name>
    <name type="ORF">DDB_G0272158</name>
</gene>
<name>WRIP1_DICDI</name>
<protein>
    <recommendedName>
        <fullName evidence="3">ATPase WRNIP1</fullName>
        <ecNumber evidence="3">3.6.1.-</ecNumber>
    </recommendedName>
    <alternativeName>
        <fullName>Werner helicase-interacting protein 1 homolog</fullName>
    </alternativeName>
</protein>
<accession>Q75JU2</accession>
<accession>Q559T3</accession>
<feature type="chain" id="PRO_0000391790" description="ATPase WRNIP1" evidence="1">
    <location>
        <begin position="1"/>
        <end position="876"/>
    </location>
</feature>
<feature type="region of interest" description="Disordered" evidence="4">
    <location>
        <begin position="56"/>
        <end position="175"/>
    </location>
</feature>
<feature type="region of interest" description="Disordered" evidence="4">
    <location>
        <begin position="621"/>
        <end position="647"/>
    </location>
</feature>
<feature type="region of interest" description="Disordered" evidence="4">
    <location>
        <begin position="714"/>
        <end position="737"/>
    </location>
</feature>
<feature type="region of interest" description="Disordered" evidence="4">
    <location>
        <begin position="833"/>
        <end position="876"/>
    </location>
</feature>
<feature type="compositionally biased region" description="Low complexity" evidence="4">
    <location>
        <begin position="56"/>
        <end position="85"/>
    </location>
</feature>
<feature type="compositionally biased region" description="Low complexity" evidence="4">
    <location>
        <begin position="104"/>
        <end position="175"/>
    </location>
</feature>
<feature type="compositionally biased region" description="Low complexity" evidence="4">
    <location>
        <begin position="626"/>
        <end position="647"/>
    </location>
</feature>
<feature type="compositionally biased region" description="Low complexity" evidence="4">
    <location>
        <begin position="714"/>
        <end position="731"/>
    </location>
</feature>
<feature type="compositionally biased region" description="Polar residues" evidence="4">
    <location>
        <begin position="835"/>
        <end position="849"/>
    </location>
</feature>
<feature type="compositionally biased region" description="Basic and acidic residues" evidence="4">
    <location>
        <begin position="850"/>
        <end position="863"/>
    </location>
</feature>
<feature type="binding site" evidence="2">
    <location>
        <begin position="240"/>
        <end position="246"/>
    </location>
    <ligand>
        <name>ATP</name>
        <dbReference type="ChEBI" id="CHEBI:30616"/>
    </ligand>
</feature>
<reference key="1">
    <citation type="journal article" date="2002" name="Nature">
        <title>Sequence and analysis of chromosome 2 of Dictyostelium discoideum.</title>
        <authorList>
            <person name="Gloeckner G."/>
            <person name="Eichinger L."/>
            <person name="Szafranski K."/>
            <person name="Pachebat J.A."/>
            <person name="Bankier A.T."/>
            <person name="Dear P.H."/>
            <person name="Lehmann R."/>
            <person name="Baumgart C."/>
            <person name="Parra G."/>
            <person name="Abril J.F."/>
            <person name="Guigo R."/>
            <person name="Kumpf K."/>
            <person name="Tunggal B."/>
            <person name="Cox E.C."/>
            <person name="Quail M.A."/>
            <person name="Platzer M."/>
            <person name="Rosenthal A."/>
            <person name="Noegel A.A."/>
        </authorList>
    </citation>
    <scope>NUCLEOTIDE SEQUENCE [LARGE SCALE GENOMIC DNA]</scope>
    <source>
        <strain>AX4</strain>
    </source>
</reference>
<reference evidence="5" key="2">
    <citation type="journal article" date="2005" name="Nature">
        <title>The genome of the social amoeba Dictyostelium discoideum.</title>
        <authorList>
            <person name="Eichinger L."/>
            <person name="Pachebat J.A."/>
            <person name="Gloeckner G."/>
            <person name="Rajandream M.A."/>
            <person name="Sucgang R."/>
            <person name="Berriman M."/>
            <person name="Song J."/>
            <person name="Olsen R."/>
            <person name="Szafranski K."/>
            <person name="Xu Q."/>
            <person name="Tunggal B."/>
            <person name="Kummerfeld S."/>
            <person name="Madera M."/>
            <person name="Konfortov B.A."/>
            <person name="Rivero F."/>
            <person name="Bankier A.T."/>
            <person name="Lehmann R."/>
            <person name="Hamlin N."/>
            <person name="Davies R."/>
            <person name="Gaudet P."/>
            <person name="Fey P."/>
            <person name="Pilcher K."/>
            <person name="Chen G."/>
            <person name="Saunders D."/>
            <person name="Sodergren E.J."/>
            <person name="Davis P."/>
            <person name="Kerhornou A."/>
            <person name="Nie X."/>
            <person name="Hall N."/>
            <person name="Anjard C."/>
            <person name="Hemphill L."/>
            <person name="Bason N."/>
            <person name="Farbrother P."/>
            <person name="Desany B."/>
            <person name="Just E."/>
            <person name="Morio T."/>
            <person name="Rost R."/>
            <person name="Churcher C.M."/>
            <person name="Cooper J."/>
            <person name="Haydock S."/>
            <person name="van Driessche N."/>
            <person name="Cronin A."/>
            <person name="Goodhead I."/>
            <person name="Muzny D.M."/>
            <person name="Mourier T."/>
            <person name="Pain A."/>
            <person name="Lu M."/>
            <person name="Harper D."/>
            <person name="Lindsay R."/>
            <person name="Hauser H."/>
            <person name="James K.D."/>
            <person name="Quiles M."/>
            <person name="Madan Babu M."/>
            <person name="Saito T."/>
            <person name="Buchrieser C."/>
            <person name="Wardroper A."/>
            <person name="Felder M."/>
            <person name="Thangavelu M."/>
            <person name="Johnson D."/>
            <person name="Knights A."/>
            <person name="Loulseged H."/>
            <person name="Mungall K.L."/>
            <person name="Oliver K."/>
            <person name="Price C."/>
            <person name="Quail M.A."/>
            <person name="Urushihara H."/>
            <person name="Hernandez J."/>
            <person name="Rabbinowitsch E."/>
            <person name="Steffen D."/>
            <person name="Sanders M."/>
            <person name="Ma J."/>
            <person name="Kohara Y."/>
            <person name="Sharp S."/>
            <person name="Simmonds M.N."/>
            <person name="Spiegler S."/>
            <person name="Tivey A."/>
            <person name="Sugano S."/>
            <person name="White B."/>
            <person name="Walker D."/>
            <person name="Woodward J.R."/>
            <person name="Winckler T."/>
            <person name="Tanaka Y."/>
            <person name="Shaulsky G."/>
            <person name="Schleicher M."/>
            <person name="Weinstock G.M."/>
            <person name="Rosenthal A."/>
            <person name="Cox E.C."/>
            <person name="Chisholm R.L."/>
            <person name="Gibbs R.A."/>
            <person name="Loomis W.F."/>
            <person name="Platzer M."/>
            <person name="Kay R.R."/>
            <person name="Williams J.G."/>
            <person name="Dear P.H."/>
            <person name="Noegel A.A."/>
            <person name="Barrell B.G."/>
            <person name="Kuspa A."/>
        </authorList>
    </citation>
    <scope>NUCLEOTIDE SEQUENCE [LARGE SCALE GENOMIC DNA]</scope>
    <source>
        <strain>AX4</strain>
    </source>
</reference>
<comment type="function">
    <text evidence="3">Functions as a modulator for initiation or reinitiation events during DNA polymerase delta-mediated DNA synthesis. Has an intrinsic ATPase activity that functions as a sensor of DNA damage or of arrested replication forks and regulates the extent of DNA synthesis (By similarity).</text>
</comment>
<comment type="catalytic activity">
    <reaction evidence="3">
        <text>ATP + H2O = ADP + phosphate + H(+)</text>
        <dbReference type="Rhea" id="RHEA:13065"/>
        <dbReference type="ChEBI" id="CHEBI:15377"/>
        <dbReference type="ChEBI" id="CHEBI:15378"/>
        <dbReference type="ChEBI" id="CHEBI:30616"/>
        <dbReference type="ChEBI" id="CHEBI:43474"/>
        <dbReference type="ChEBI" id="CHEBI:456216"/>
    </reaction>
</comment>
<comment type="subcellular location">
    <subcellularLocation>
        <location evidence="5">Nucleus</location>
    </subcellularLocation>
</comment>
<comment type="similarity">
    <text evidence="5">Belongs to the AAA ATPase family. RarA/MGS1/WRNIP1 subfamily.</text>
</comment>
<proteinExistence type="inferred from homology"/>
<dbReference type="EC" id="3.6.1.-" evidence="3"/>
<dbReference type="EMBL" id="AAFI02000008">
    <property type="protein sequence ID" value="EAL71231.1"/>
    <property type="molecule type" value="Genomic_DNA"/>
</dbReference>
<dbReference type="RefSeq" id="XP_645251.1">
    <property type="nucleotide sequence ID" value="XM_640159.1"/>
</dbReference>
<dbReference type="SMR" id="Q75JU2"/>
<dbReference type="FunCoup" id="Q75JU2">
    <property type="interactions" value="114"/>
</dbReference>
<dbReference type="STRING" id="44689.Q75JU2"/>
<dbReference type="PaxDb" id="44689-DDB0305118"/>
<dbReference type="EnsemblProtists" id="EAL71231">
    <property type="protein sequence ID" value="EAL71231"/>
    <property type="gene ID" value="DDB_G0272158"/>
</dbReference>
<dbReference type="GeneID" id="8618418"/>
<dbReference type="KEGG" id="ddi:DDB_G0272158"/>
<dbReference type="dictyBase" id="DDB_G0272158">
    <property type="gene designation" value="wrnip1"/>
</dbReference>
<dbReference type="VEuPathDB" id="AmoebaDB:DDB_G0272158"/>
<dbReference type="eggNOG" id="KOG2028">
    <property type="taxonomic scope" value="Eukaryota"/>
</dbReference>
<dbReference type="HOGENOM" id="CLU_328297_0_0_1"/>
<dbReference type="InParanoid" id="Q75JU2"/>
<dbReference type="PRO" id="PR:Q75JU2"/>
<dbReference type="Proteomes" id="UP000002195">
    <property type="component" value="Chromosome 2"/>
</dbReference>
<dbReference type="GO" id="GO:0005634">
    <property type="term" value="C:nucleus"/>
    <property type="evidence" value="ECO:0000318"/>
    <property type="project" value="GO_Central"/>
</dbReference>
<dbReference type="GO" id="GO:0005524">
    <property type="term" value="F:ATP binding"/>
    <property type="evidence" value="ECO:0007669"/>
    <property type="project" value="UniProtKB-KW"/>
</dbReference>
<dbReference type="GO" id="GO:0016887">
    <property type="term" value="F:ATP hydrolysis activity"/>
    <property type="evidence" value="ECO:0007669"/>
    <property type="project" value="InterPro"/>
</dbReference>
<dbReference type="GO" id="GO:0003677">
    <property type="term" value="F:DNA binding"/>
    <property type="evidence" value="ECO:0007669"/>
    <property type="project" value="InterPro"/>
</dbReference>
<dbReference type="GO" id="GO:0008047">
    <property type="term" value="F:enzyme activator activity"/>
    <property type="evidence" value="ECO:0000318"/>
    <property type="project" value="GO_Central"/>
</dbReference>
<dbReference type="GO" id="GO:0046872">
    <property type="term" value="F:metal ion binding"/>
    <property type="evidence" value="ECO:0007669"/>
    <property type="project" value="UniProtKB-KW"/>
</dbReference>
<dbReference type="GO" id="GO:0017116">
    <property type="term" value="F:single-stranded DNA helicase activity"/>
    <property type="evidence" value="ECO:0000318"/>
    <property type="project" value="GO_Central"/>
</dbReference>
<dbReference type="GO" id="GO:0000731">
    <property type="term" value="P:DNA synthesis involved in DNA repair"/>
    <property type="evidence" value="ECO:0000318"/>
    <property type="project" value="GO_Central"/>
</dbReference>
<dbReference type="GO" id="GO:0006261">
    <property type="term" value="P:DNA-templated DNA replication"/>
    <property type="evidence" value="ECO:0000318"/>
    <property type="project" value="GO_Central"/>
</dbReference>
<dbReference type="CDD" id="cd00009">
    <property type="entry name" value="AAA"/>
    <property type="match status" value="1"/>
</dbReference>
<dbReference type="CDD" id="cd18139">
    <property type="entry name" value="HLD_clamp_RarA"/>
    <property type="match status" value="1"/>
</dbReference>
<dbReference type="FunFam" id="1.20.272.10:FF:000001">
    <property type="entry name" value="Putative AAA family ATPase"/>
    <property type="match status" value="1"/>
</dbReference>
<dbReference type="FunFam" id="1.10.8.60:FF:000029">
    <property type="entry name" value="Replication-associated recombination protein A"/>
    <property type="match status" value="1"/>
</dbReference>
<dbReference type="FunFam" id="3.40.50.300:FF:000137">
    <property type="entry name" value="Replication-associated recombination protein A"/>
    <property type="match status" value="1"/>
</dbReference>
<dbReference type="Gene3D" id="1.10.8.60">
    <property type="match status" value="1"/>
</dbReference>
<dbReference type="Gene3D" id="1.20.272.10">
    <property type="match status" value="1"/>
</dbReference>
<dbReference type="Gene3D" id="1.10.3710.10">
    <property type="entry name" value="DNA polymerase III clamp loader subunits, C-terminal domain"/>
    <property type="match status" value="1"/>
</dbReference>
<dbReference type="Gene3D" id="3.40.50.300">
    <property type="entry name" value="P-loop containing nucleotide triphosphate hydrolases"/>
    <property type="match status" value="1"/>
</dbReference>
<dbReference type="InterPro" id="IPR003593">
    <property type="entry name" value="AAA+_ATPase"/>
</dbReference>
<dbReference type="InterPro" id="IPR032423">
    <property type="entry name" value="AAA_assoc_2"/>
</dbReference>
<dbReference type="InterPro" id="IPR051314">
    <property type="entry name" value="AAA_ATPase_RarA/MGS1/WRNIP1"/>
</dbReference>
<dbReference type="InterPro" id="IPR003959">
    <property type="entry name" value="ATPase_AAA_core"/>
</dbReference>
<dbReference type="InterPro" id="IPR008921">
    <property type="entry name" value="DNA_pol3_clamp-load_cplx_C"/>
</dbReference>
<dbReference type="InterPro" id="IPR021886">
    <property type="entry name" value="MgsA_C"/>
</dbReference>
<dbReference type="InterPro" id="IPR027417">
    <property type="entry name" value="P-loop_NTPase"/>
</dbReference>
<dbReference type="PANTHER" id="PTHR13779:SF7">
    <property type="entry name" value="ATPASE WRNIP1"/>
    <property type="match status" value="1"/>
</dbReference>
<dbReference type="PANTHER" id="PTHR13779">
    <property type="entry name" value="WERNER HELICASE-INTERACTING PROTEIN 1 FAMILY MEMBER"/>
    <property type="match status" value="1"/>
</dbReference>
<dbReference type="Pfam" id="PF00004">
    <property type="entry name" value="AAA"/>
    <property type="match status" value="1"/>
</dbReference>
<dbReference type="Pfam" id="PF16193">
    <property type="entry name" value="AAA_assoc_2"/>
    <property type="match status" value="1"/>
</dbReference>
<dbReference type="Pfam" id="PF12002">
    <property type="entry name" value="MgsA_C"/>
    <property type="match status" value="1"/>
</dbReference>
<dbReference type="SMART" id="SM00382">
    <property type="entry name" value="AAA"/>
    <property type="match status" value="1"/>
</dbReference>
<dbReference type="SUPFAM" id="SSF52540">
    <property type="entry name" value="P-loop containing nucleoside triphosphate hydrolases"/>
    <property type="match status" value="1"/>
</dbReference>
<dbReference type="SUPFAM" id="SSF48019">
    <property type="entry name" value="post-AAA+ oligomerization domain-like"/>
    <property type="match status" value="1"/>
</dbReference>
<evidence type="ECO:0000250" key="1"/>
<evidence type="ECO:0000250" key="2">
    <source>
        <dbReference type="UniProtKB" id="P55072"/>
    </source>
</evidence>
<evidence type="ECO:0000250" key="3">
    <source>
        <dbReference type="UniProtKB" id="Q96S55"/>
    </source>
</evidence>
<evidence type="ECO:0000256" key="4">
    <source>
        <dbReference type="SAM" id="MobiDB-lite"/>
    </source>
</evidence>
<evidence type="ECO:0000305" key="5"/>